<protein>
    <recommendedName>
        <fullName>Glutamate dehydrogenase 2, mitochondrial</fullName>
        <shortName>GDH 2</shortName>
        <ecNumber>1.4.1.3</ecNumber>
    </recommendedName>
</protein>
<proteinExistence type="inferred from homology"/>
<comment type="function">
    <text>Important for recycling the chief excitatory neurotransmitter, glutamate, during neurotransmission.</text>
</comment>
<comment type="catalytic activity">
    <reaction evidence="2">
        <text>L-glutamate + NAD(+) + H2O = 2-oxoglutarate + NH4(+) + NADH + H(+)</text>
        <dbReference type="Rhea" id="RHEA:15133"/>
        <dbReference type="ChEBI" id="CHEBI:15377"/>
        <dbReference type="ChEBI" id="CHEBI:15378"/>
        <dbReference type="ChEBI" id="CHEBI:16810"/>
        <dbReference type="ChEBI" id="CHEBI:28938"/>
        <dbReference type="ChEBI" id="CHEBI:29985"/>
        <dbReference type="ChEBI" id="CHEBI:57540"/>
        <dbReference type="ChEBI" id="CHEBI:57945"/>
        <dbReference type="EC" id="1.4.1.3"/>
    </reaction>
</comment>
<comment type="catalytic activity">
    <reaction evidence="2">
        <text>L-glutamate + NADP(+) + H2O = 2-oxoglutarate + NH4(+) + NADPH + H(+)</text>
        <dbReference type="Rhea" id="RHEA:11612"/>
        <dbReference type="ChEBI" id="CHEBI:15377"/>
        <dbReference type="ChEBI" id="CHEBI:15378"/>
        <dbReference type="ChEBI" id="CHEBI:16810"/>
        <dbReference type="ChEBI" id="CHEBI:28938"/>
        <dbReference type="ChEBI" id="CHEBI:29985"/>
        <dbReference type="ChEBI" id="CHEBI:57783"/>
        <dbReference type="ChEBI" id="CHEBI:58349"/>
        <dbReference type="EC" id="1.4.1.3"/>
    </reaction>
</comment>
<comment type="subunit">
    <text evidence="1">Homohexamer.</text>
</comment>
<comment type="subcellular location">
    <subcellularLocation>
        <location evidence="1">Mitochondrion matrix</location>
    </subcellularLocation>
</comment>
<comment type="PTM">
    <text evidence="1">Stoichiometry shows that ADP-ribosylation occurs in one subunit per catalytically active homohexamer.</text>
</comment>
<comment type="similarity">
    <text evidence="3">Belongs to the Glu/Leu/Phe/Val dehydrogenases family.</text>
</comment>
<reference key="1">
    <citation type="journal article" date="2004" name="Nat. Genet.">
        <title>Birth and adaptive evolution of a hominoid gene that supports high neurotransmitter flux.</title>
        <authorList>
            <person name="Burki F."/>
            <person name="Kaessmann H."/>
        </authorList>
    </citation>
    <scope>NUCLEOTIDE SEQUENCE [GENOMIC DNA]</scope>
</reference>
<sequence>MYRYLAKALLTSRAGPAALGSAANHSAALLGRGPGQPAAASQPGLALAARRHYSELVADREDDPNFFKMVEGFFDRGASIVEDKLVKDLRTQESEEQKRNRVRGILRIIKPCNHVLSLSFPIRRDDGSWEVIEGYRAQHSQHRTPCKGGIRYSTDVSVDEVKALASLMTYKCAVVDVPFGGAKAGVKINPKNYTENELEKITRRFTMELAKKGFIGPGVDVPAPDMNTGEREMSWIADTYASTIGHYDINAHACVTGKPISQGGIHGRISATGRGVFHGIENFINEASYMSILGMTPGFRDKTFVVQGFGNVGLHSMRYLHRFGAKCIAVGESDGSIWNPDGIDPKELEDFRLQHGSLLGFPKAKPYEGSILEIDCDILIPAATEKQLTKSNAPRVKAKIIAEGANGPTTPEADKIFLERNILVIPDLYLNAGGVTVSYFEWLKNLNHVSYGRLTFKYERDSNYHLLMSVQESLERKFGKHGGTIPIVPTAEFQDSISGASEKDIVHSALAYTMERSARQIMHTAMKYNLGLDLRTAAYVNAIEKVFKVYSEAGVTFT</sequence>
<dbReference type="EC" id="1.4.1.3"/>
<dbReference type="EMBL" id="AY588274">
    <property type="protein sequence ID" value="AAU03136.1"/>
    <property type="molecule type" value="Genomic_DNA"/>
</dbReference>
<dbReference type="RefSeq" id="NP_001009004.1">
    <property type="nucleotide sequence ID" value="NM_001009004.1"/>
</dbReference>
<dbReference type="SMR" id="Q64HZ8"/>
<dbReference type="FunCoup" id="Q64HZ8">
    <property type="interactions" value="487"/>
</dbReference>
<dbReference type="STRING" id="9598.ENSPTRP00000004734"/>
<dbReference type="PaxDb" id="9598-ENSPTRP00000004734"/>
<dbReference type="GeneID" id="449581"/>
<dbReference type="KEGG" id="ptr:449581"/>
<dbReference type="CTD" id="2747"/>
<dbReference type="eggNOG" id="KOG2250">
    <property type="taxonomic scope" value="Eukaryota"/>
</dbReference>
<dbReference type="InParanoid" id="Q64HZ8"/>
<dbReference type="OrthoDB" id="5027at9604"/>
<dbReference type="Proteomes" id="UP000002277">
    <property type="component" value="Unplaced"/>
</dbReference>
<dbReference type="GO" id="GO:0005759">
    <property type="term" value="C:mitochondrial matrix"/>
    <property type="evidence" value="ECO:0007669"/>
    <property type="project" value="UniProtKB-SubCell"/>
</dbReference>
<dbReference type="GO" id="GO:0005739">
    <property type="term" value="C:mitochondrion"/>
    <property type="evidence" value="ECO:0000318"/>
    <property type="project" value="GO_Central"/>
</dbReference>
<dbReference type="GO" id="GO:0004352">
    <property type="term" value="F:glutamate dehydrogenase (NAD+) activity"/>
    <property type="evidence" value="ECO:0000318"/>
    <property type="project" value="GO_Central"/>
</dbReference>
<dbReference type="GO" id="GO:0004354">
    <property type="term" value="F:glutamate dehydrogenase (NADP+) activity"/>
    <property type="evidence" value="ECO:0007669"/>
    <property type="project" value="RHEA"/>
</dbReference>
<dbReference type="GO" id="GO:0006538">
    <property type="term" value="P:glutamate catabolic process"/>
    <property type="evidence" value="ECO:0000318"/>
    <property type="project" value="GO_Central"/>
</dbReference>
<dbReference type="CDD" id="cd01076">
    <property type="entry name" value="NAD_bind_1_Glu_DH"/>
    <property type="match status" value="1"/>
</dbReference>
<dbReference type="FunFam" id="1.10.287.140:FF:000001">
    <property type="entry name" value="Glutamate dehydrogenase 1, mitochondrial"/>
    <property type="match status" value="1"/>
</dbReference>
<dbReference type="FunFam" id="3.40.50.10860:FF:000007">
    <property type="entry name" value="Glutamate dehydrogenase 1, mitochondrial"/>
    <property type="match status" value="1"/>
</dbReference>
<dbReference type="FunFam" id="3.40.50.720:FF:000100">
    <property type="entry name" value="Glutamate dehydrogenase 1, mitochondrial"/>
    <property type="match status" value="1"/>
</dbReference>
<dbReference type="Gene3D" id="1.10.287.140">
    <property type="match status" value="1"/>
</dbReference>
<dbReference type="Gene3D" id="3.40.50.10860">
    <property type="entry name" value="Leucine Dehydrogenase, chain A, domain 1"/>
    <property type="match status" value="1"/>
</dbReference>
<dbReference type="Gene3D" id="3.40.50.720">
    <property type="entry name" value="NAD(P)-binding Rossmann-like Domain"/>
    <property type="match status" value="1"/>
</dbReference>
<dbReference type="InterPro" id="IPR046346">
    <property type="entry name" value="Aminoacid_DH-like_N_sf"/>
</dbReference>
<dbReference type="InterPro" id="IPR006095">
    <property type="entry name" value="Glu/Leu/Phe/Val/Trp_DH"/>
</dbReference>
<dbReference type="InterPro" id="IPR006096">
    <property type="entry name" value="Glu/Leu/Phe/Val/Trp_DH_C"/>
</dbReference>
<dbReference type="InterPro" id="IPR006097">
    <property type="entry name" value="Glu/Leu/Phe/Val/Trp_DH_dimer"/>
</dbReference>
<dbReference type="InterPro" id="IPR033524">
    <property type="entry name" value="Glu/Leu/Phe/Val_DH_AS"/>
</dbReference>
<dbReference type="InterPro" id="IPR036291">
    <property type="entry name" value="NAD(P)-bd_dom_sf"/>
</dbReference>
<dbReference type="InterPro" id="IPR033922">
    <property type="entry name" value="NAD_bind_Glu_DH"/>
</dbReference>
<dbReference type="PANTHER" id="PTHR11606">
    <property type="entry name" value="GLUTAMATE DEHYDROGENASE"/>
    <property type="match status" value="1"/>
</dbReference>
<dbReference type="PANTHER" id="PTHR11606:SF15">
    <property type="entry name" value="GLUTAMATE DEHYDROGENASE 2, MITOCHONDRIAL"/>
    <property type="match status" value="1"/>
</dbReference>
<dbReference type="Pfam" id="PF00208">
    <property type="entry name" value="ELFV_dehydrog"/>
    <property type="match status" value="1"/>
</dbReference>
<dbReference type="Pfam" id="PF02812">
    <property type="entry name" value="ELFV_dehydrog_N"/>
    <property type="match status" value="1"/>
</dbReference>
<dbReference type="PRINTS" id="PR00082">
    <property type="entry name" value="GLFDHDRGNASE"/>
</dbReference>
<dbReference type="SMART" id="SM00839">
    <property type="entry name" value="ELFV_dehydrog"/>
    <property type="match status" value="1"/>
</dbReference>
<dbReference type="SUPFAM" id="SSF53223">
    <property type="entry name" value="Aminoacid dehydrogenase-like, N-terminal domain"/>
    <property type="match status" value="1"/>
</dbReference>
<dbReference type="SUPFAM" id="SSF51735">
    <property type="entry name" value="NAD(P)-binding Rossmann-fold domains"/>
    <property type="match status" value="1"/>
</dbReference>
<dbReference type="PROSITE" id="PS00074">
    <property type="entry name" value="GLFV_DEHYDROGENASE"/>
    <property type="match status" value="1"/>
</dbReference>
<organism>
    <name type="scientific">Pan troglodytes</name>
    <name type="common">Chimpanzee</name>
    <dbReference type="NCBI Taxonomy" id="9598"/>
    <lineage>
        <taxon>Eukaryota</taxon>
        <taxon>Metazoa</taxon>
        <taxon>Chordata</taxon>
        <taxon>Craniata</taxon>
        <taxon>Vertebrata</taxon>
        <taxon>Euteleostomi</taxon>
        <taxon>Mammalia</taxon>
        <taxon>Eutheria</taxon>
        <taxon>Euarchontoglires</taxon>
        <taxon>Primates</taxon>
        <taxon>Haplorrhini</taxon>
        <taxon>Catarrhini</taxon>
        <taxon>Hominidae</taxon>
        <taxon>Pan</taxon>
    </lineage>
</organism>
<feature type="transit peptide" description="Mitochondrion" evidence="1">
    <location>
        <begin position="1"/>
        <end position="53"/>
    </location>
</feature>
<feature type="chain" id="PRO_0000007210" description="Glutamate dehydrogenase 2, mitochondrial">
    <location>
        <begin position="54"/>
        <end position="558"/>
    </location>
</feature>
<feature type="active site" evidence="2">
    <location>
        <position position="183"/>
    </location>
</feature>
<feature type="binding site" evidence="1">
    <location>
        <position position="84"/>
    </location>
    <ligand>
        <name>substrate</name>
    </ligand>
</feature>
<feature type="modified residue" description="ADP-ribosylcysteine" evidence="1">
    <location>
        <position position="172"/>
    </location>
</feature>
<keyword id="KW-0013">ADP-ribosylation</keyword>
<keyword id="KW-0496">Mitochondrion</keyword>
<keyword id="KW-0521">NADP</keyword>
<keyword id="KW-0560">Oxidoreductase</keyword>
<keyword id="KW-1185">Reference proteome</keyword>
<keyword id="KW-0809">Transit peptide</keyword>
<accession>Q64HZ8</accession>
<gene>
    <name type="primary">GLUD2</name>
</gene>
<evidence type="ECO:0000250" key="1"/>
<evidence type="ECO:0000255" key="2">
    <source>
        <dbReference type="PROSITE-ProRule" id="PRU10011"/>
    </source>
</evidence>
<evidence type="ECO:0000305" key="3"/>
<name>DHE4_PANTR</name>